<protein>
    <recommendedName>
        <fullName evidence="6">Necrosis-inducing secreted protein 1</fullName>
    </recommendedName>
    <alternativeName>
        <fullName evidence="6">Secreted effector NIS1</fullName>
    </alternativeName>
</protein>
<name>NIS1_COLHI</name>
<keyword id="KW-0325">Glycoprotein</keyword>
<keyword id="KW-1035">Host cytoplasm</keyword>
<keyword id="KW-1185">Reference proteome</keyword>
<keyword id="KW-0964">Secreted</keyword>
<keyword id="KW-0732">Signal</keyword>
<keyword id="KW-0843">Virulence</keyword>
<comment type="function">
    <text evidence="4 5 8">Secreted effector that induces necrotic lesions in Nicotiana benthamiana (PubMed:22352720). Interacts with the host receptor-like kinases (RLKs) BAK1/SERK3 and BKK1/SERK4, inhibits their kinase activity and suppresses INF1-induced pathogen-associated molecular pattern (PAMP)-triggered immunity (PTI) in N.benthamiana (PubMed:30584105). Also interacts with the host receptor-like cytoplasmic kinase (RLCK) BIK1 and inhibits its kinase activity, thereby inhibiting PAMP-induced ROS generation (Probable). In PTI, phosphorylation relaying by RLKs and RLCKs is critical for the initiation of downstream signaling (Probable).</text>
</comment>
<comment type="subcellular location">
    <subcellularLocation>
        <location evidence="8">Secreted</location>
    </subcellularLocation>
    <subcellularLocation>
        <location evidence="8">Host cytoplasm</location>
    </subcellularLocation>
</comment>
<comment type="domain">
    <text evidence="1">The C-terminal region from residues 103 to 132 is important for BAK1/SERK3-binding and the host cell death suppression.</text>
</comment>
<comment type="similarity">
    <text evidence="7">Belongs to the NIS1 effector family.</text>
</comment>
<organism>
    <name type="scientific">Colletotrichum higginsianum (strain IMI 349063)</name>
    <name type="common">Crucifer anthracnose fungus</name>
    <dbReference type="NCBI Taxonomy" id="759273"/>
    <lineage>
        <taxon>Eukaryota</taxon>
        <taxon>Fungi</taxon>
        <taxon>Dikarya</taxon>
        <taxon>Ascomycota</taxon>
        <taxon>Pezizomycotina</taxon>
        <taxon>Sordariomycetes</taxon>
        <taxon>Hypocreomycetidae</taxon>
        <taxon>Glomerellales</taxon>
        <taxon>Glomerellaceae</taxon>
        <taxon>Colletotrichum</taxon>
        <taxon>Colletotrichum destructivum species complex</taxon>
    </lineage>
</organism>
<proteinExistence type="inferred from homology"/>
<dbReference type="EMBL" id="LTAN01000005">
    <property type="protein sequence ID" value="OBR09229.1"/>
    <property type="molecule type" value="Genomic_DNA"/>
</dbReference>
<dbReference type="EMBL" id="CACQ02008057">
    <property type="status" value="NOT_ANNOTATED_CDS"/>
    <property type="molecule type" value="Genomic_DNA"/>
</dbReference>
<dbReference type="RefSeq" id="XP_018157746.1">
    <property type="nucleotide sequence ID" value="XM_018302968.1"/>
</dbReference>
<dbReference type="SMR" id="H1VZX9"/>
<dbReference type="STRING" id="759273.H1VZX9"/>
<dbReference type="GlyCosmos" id="H1VZX9">
    <property type="glycosylation" value="3 sites, No reported glycans"/>
</dbReference>
<dbReference type="EnsemblFungi" id="CCF45791">
    <property type="protein sequence ID" value="CCF45791"/>
    <property type="gene ID" value="CH063_03697"/>
</dbReference>
<dbReference type="GeneID" id="28867075"/>
<dbReference type="KEGG" id="chig:CH63R_07994"/>
<dbReference type="VEuPathDB" id="FungiDB:CH63R_07994"/>
<dbReference type="eggNOG" id="ENOG502S8NB">
    <property type="taxonomic scope" value="Eukaryota"/>
</dbReference>
<dbReference type="HOGENOM" id="CLU_138726_0_0_1"/>
<dbReference type="OrthoDB" id="53094at1028384"/>
<dbReference type="Proteomes" id="UP000007174">
    <property type="component" value="Unassembled WGS sequence"/>
</dbReference>
<dbReference type="Proteomes" id="UP000092177">
    <property type="component" value="Chromosome 5"/>
</dbReference>
<dbReference type="GO" id="GO:0005576">
    <property type="term" value="C:extracellular region"/>
    <property type="evidence" value="ECO:0007669"/>
    <property type="project" value="UniProtKB-SubCell"/>
</dbReference>
<dbReference type="GO" id="GO:0030430">
    <property type="term" value="C:host cell cytoplasm"/>
    <property type="evidence" value="ECO:0007669"/>
    <property type="project" value="UniProtKB-SubCell"/>
</dbReference>
<dbReference type="InterPro" id="IPR045469">
    <property type="entry name" value="Nis1"/>
</dbReference>
<dbReference type="Pfam" id="PF19271">
    <property type="entry name" value="Nis1"/>
    <property type="match status" value="1"/>
</dbReference>
<evidence type="ECO:0000250" key="1">
    <source>
        <dbReference type="UniProtKB" id="N4VG36"/>
    </source>
</evidence>
<evidence type="ECO:0000255" key="2"/>
<evidence type="ECO:0000255" key="3">
    <source>
        <dbReference type="PROSITE-ProRule" id="PRU00498"/>
    </source>
</evidence>
<evidence type="ECO:0000269" key="4">
    <source>
    </source>
</evidence>
<evidence type="ECO:0000269" key="5">
    <source>
    </source>
</evidence>
<evidence type="ECO:0000303" key="6">
    <source>
    </source>
</evidence>
<evidence type="ECO:0000305" key="7"/>
<evidence type="ECO:0000305" key="8">
    <source>
    </source>
</evidence>
<accession>H1VZX9</accession>
<sequence length="144" mass="14963">MQFRASIAAAAGLFALANARIYGIAFPETVKAGDEVEAVITTENYIQAVQDIAIAFGIATEASAYPETLGNALGSFYLGPEESNTLENITETVTIPAGLAPGQYVVAAGLYSLYGASSSPTLSHYNVTVTVGNVTSETYVGSQR</sequence>
<feature type="signal peptide" evidence="2">
    <location>
        <begin position="1"/>
        <end position="19"/>
    </location>
</feature>
<feature type="chain" id="PRO_0000447639" description="Necrosis-inducing secreted protein 1">
    <location>
        <begin position="20"/>
        <end position="144"/>
    </location>
</feature>
<feature type="region of interest" description="BAK1/SERK3-binding" evidence="1">
    <location>
        <begin position="103"/>
        <end position="132"/>
    </location>
</feature>
<feature type="glycosylation site" description="N-linked (GlcNAc...) asparagine" evidence="3">
    <location>
        <position position="88"/>
    </location>
</feature>
<feature type="glycosylation site" description="N-linked (GlcNAc...) asparagine" evidence="3">
    <location>
        <position position="126"/>
    </location>
</feature>
<feature type="glycosylation site" description="N-linked (GlcNAc...) asparagine" evidence="3">
    <location>
        <position position="133"/>
    </location>
</feature>
<gene>
    <name evidence="6" type="primary">NIS1</name>
    <name type="ORF">CH063_03697</name>
    <name type="ORF">CH63R_07994</name>
</gene>
<reference key="1">
    <citation type="journal article" date="2012" name="Nat. Genet.">
        <title>Lifestyle transitions in plant pathogenic Colletotrichum fungi deciphered by genome and transcriptome analyses.</title>
        <authorList>
            <person name="O'Connell R.J."/>
            <person name="Thon M.R."/>
            <person name="Hacquard S."/>
            <person name="Amyotte S.G."/>
            <person name="Kleemann J."/>
            <person name="Torres M.F."/>
            <person name="Damm U."/>
            <person name="Buiate E.A."/>
            <person name="Epstein L."/>
            <person name="Alkan N."/>
            <person name="Altmueller J."/>
            <person name="Alvarado-Balderrama L."/>
            <person name="Bauser C.A."/>
            <person name="Becker C."/>
            <person name="Birren B.W."/>
            <person name="Chen Z."/>
            <person name="Choi J."/>
            <person name="Crouch J.A."/>
            <person name="Duvick J.P."/>
            <person name="Farman M.A."/>
            <person name="Gan P."/>
            <person name="Heiman D."/>
            <person name="Henrissat B."/>
            <person name="Howard R.J."/>
            <person name="Kabbage M."/>
            <person name="Koch C."/>
            <person name="Kracher B."/>
            <person name="Kubo Y."/>
            <person name="Law A.D."/>
            <person name="Lebrun M.-H."/>
            <person name="Lee Y.-H."/>
            <person name="Miyara I."/>
            <person name="Moore N."/>
            <person name="Neumann U."/>
            <person name="Nordstroem K."/>
            <person name="Panaccione D.G."/>
            <person name="Panstruga R."/>
            <person name="Place M."/>
            <person name="Proctor R.H."/>
            <person name="Prusky D."/>
            <person name="Rech G."/>
            <person name="Reinhardt R."/>
            <person name="Rollins J.A."/>
            <person name="Rounsley S."/>
            <person name="Schardl C.L."/>
            <person name="Schwartz D.C."/>
            <person name="Shenoy N."/>
            <person name="Shirasu K."/>
            <person name="Sikhakolli U.R."/>
            <person name="Stueber K."/>
            <person name="Sukno S.A."/>
            <person name="Sweigard J.A."/>
            <person name="Takano Y."/>
            <person name="Takahara H."/>
            <person name="Trail F."/>
            <person name="van der Does H.C."/>
            <person name="Voll L.M."/>
            <person name="Will I."/>
            <person name="Young S."/>
            <person name="Zeng Q."/>
            <person name="Zhang J."/>
            <person name="Zhou S."/>
            <person name="Dickman M.B."/>
            <person name="Schulze-Lefert P."/>
            <person name="Ver Loren van Themaat E."/>
            <person name="Ma L.-J."/>
            <person name="Vaillancourt L.J."/>
        </authorList>
    </citation>
    <scope>NUCLEOTIDE SEQUENCE [LARGE SCALE GENOMIC DNA]</scope>
    <source>
        <strain>IMI 349063</strain>
    </source>
</reference>
<reference key="2">
    <citation type="journal article" date="2017" name="BMC Genomics">
        <title>Gapless genome assembly of Colletotrichum higginsianum reveals chromosome structure and association of transposable elements with secondary metabolite gene clusters.</title>
        <authorList>
            <person name="Dallery J.-F."/>
            <person name="Lapalu N."/>
            <person name="Zampounis A."/>
            <person name="Pigne S."/>
            <person name="Luyten I."/>
            <person name="Amselem J."/>
            <person name="Wittenberg A.H.J."/>
            <person name="Zhou S."/>
            <person name="de Queiroz M.V."/>
            <person name="Robin G.P."/>
            <person name="Auger A."/>
            <person name="Hainaut M."/>
            <person name="Henrissat B."/>
            <person name="Kim K.-T."/>
            <person name="Lee Y.-H."/>
            <person name="Lespinet O."/>
            <person name="Schwartz D.C."/>
            <person name="Thon M.R."/>
            <person name="O'Connell R.J."/>
        </authorList>
    </citation>
    <scope>NUCLEOTIDE SEQUENCE [LARGE SCALE GENOMIC DNA]</scope>
    <scope>GENOME REANNOTATION</scope>
    <source>
        <strain>IMI 349063</strain>
    </source>
</reference>
<reference key="3">
    <citation type="journal article" date="2012" name="Mol. Plant Microbe Interact.">
        <title>Cell death of Nicotiana benthamiana is induced by secreted protein NIS1 of Colletotrichum orbiculare and is suppressed by a homologue of CgDN3.</title>
        <authorList>
            <person name="Yoshino K."/>
            <person name="Irieda H."/>
            <person name="Sugimoto F."/>
            <person name="Yoshioka H."/>
            <person name="Okuno T."/>
            <person name="Takano Y."/>
        </authorList>
    </citation>
    <scope>FUNCTION</scope>
</reference>
<reference key="4">
    <citation type="journal article" date="2019" name="Proc. Natl. Acad. Sci. U.S.A.">
        <title>Conserved fungal effector suppresses PAMP-triggered immunity by targeting plant immune kinases.</title>
        <authorList>
            <person name="Irieda H."/>
            <person name="Inoue Y."/>
            <person name="Mori M."/>
            <person name="Yamada K."/>
            <person name="Oshikawa Y."/>
            <person name="Saitoh H."/>
            <person name="Uemura A."/>
            <person name="Terauchi R."/>
            <person name="Kitakura S."/>
            <person name="Kosaka A."/>
            <person name="Singkaravanit-Ogawa S."/>
            <person name="Takano Y."/>
        </authorList>
    </citation>
    <scope>FUNCTION</scope>
</reference>